<reference key="1">
    <citation type="journal article" date="2009" name="Nat. Biotechnol.">
        <title>Genome sequence of the recombinant protein production host Pichia pastoris.</title>
        <authorList>
            <person name="De Schutter K."/>
            <person name="Lin Y.-C."/>
            <person name="Tiels P."/>
            <person name="Van Hecke A."/>
            <person name="Glinka S."/>
            <person name="Weber-Lehmann J."/>
            <person name="Rouze P."/>
            <person name="Van de Peer Y."/>
            <person name="Callewaert N."/>
        </authorList>
    </citation>
    <scope>NUCLEOTIDE SEQUENCE [LARGE SCALE GENOMIC DNA]</scope>
    <source>
        <strain>GS115 / ATCC 20864</strain>
    </source>
</reference>
<comment type="function">
    <text evidence="1">RNA-binding nucleolar protein required for pre-rRNA processing. Involved in production of 18S rRNA and assembly of small ribosomal subunit (By similarity).</text>
</comment>
<comment type="subcellular location">
    <subcellularLocation>
        <location evidence="1">Nucleus</location>
        <location evidence="1">Nucleolus</location>
    </subcellularLocation>
</comment>
<comment type="similarity">
    <text evidence="3">Belongs to the NOP9 family.</text>
</comment>
<proteinExistence type="inferred from homology"/>
<protein>
    <recommendedName>
        <fullName>Nucleolar protein 9</fullName>
    </recommendedName>
    <alternativeName>
        <fullName>Pumilio domain-containing protein NOP9</fullName>
    </alternativeName>
</protein>
<sequence length="645" mass="74333">MAKERGRRNLKKIKESSQSDSLKTLKADPSPSREAAQIDVNTFFGLVNSEELDYFKQAESTLNANAFENSEERQGFVSSVFEEAKGKELKLVTNQICSKLMERLILNGSDRQVKRLFKAFNGHFLSLAVHKYSSHVLETLFIRSASVIENELLNNYQEEEAEEEESDEVFATMENMFLFMLAELSSSIQKLIVHQYGSHVIRLLLLIVGARELPSSIMSNSILRSKKSKIARKMIEIKDNQDSNRAYQVPAGFKNELQELLGLIAKDKDSKQLRELAIDKIASPVIQLCIQLEGLVDKDRTIWTTIFPEVDDKDPKEEAFVEYLLSDPIGSHFFQAAIKYQKPKTVHRLYDLYIKDRLLKLAKRETTGAFVVKELLGKLKATDVTEMLDILIPHLSELIENNLEIGQAIVDASIARNNYGKEGIISQFLKVFNDANVLESVLKLSTSTLGNTKNDWPTAEERRCAIFLEKLVEYDDSFLDAVIAALLELPEDRFIQMCMHGVFSHVVESVLVIERVDIVKRRRLLNIFTEHVVTLSCNAYGSHIMDKLWQFSIKLNLFKDRIALALFENKDKIKDSIYGKLVWKNWSMELYCRRMYDWKNLIKQQELELFPDHRGAPTLLKKRPLEEPKKVEEKKDKSRGRRRYH</sequence>
<dbReference type="EMBL" id="FN392322">
    <property type="protein sequence ID" value="CAY72004.1"/>
    <property type="molecule type" value="Genomic_DNA"/>
</dbReference>
<dbReference type="RefSeq" id="XP_002494183.1">
    <property type="nucleotide sequence ID" value="XM_002494138.1"/>
</dbReference>
<dbReference type="SMR" id="C4R8S9"/>
<dbReference type="FunCoup" id="C4R8S9">
    <property type="interactions" value="947"/>
</dbReference>
<dbReference type="STRING" id="644223.C4R8S9"/>
<dbReference type="EnsemblFungi" id="CAY72004">
    <property type="protein sequence ID" value="CAY72004"/>
    <property type="gene ID" value="PAS_chr4_0742"/>
</dbReference>
<dbReference type="GeneID" id="8200635"/>
<dbReference type="KEGG" id="ppa:PAS_chr4_0742"/>
<dbReference type="eggNOG" id="KOG2188">
    <property type="taxonomic scope" value="Eukaryota"/>
</dbReference>
<dbReference type="HOGENOM" id="CLU_008720_1_1_1"/>
<dbReference type="InParanoid" id="C4R8S9"/>
<dbReference type="OMA" id="HHLVRNF"/>
<dbReference type="OrthoDB" id="392571at2759"/>
<dbReference type="Proteomes" id="UP000000314">
    <property type="component" value="Chromosome 4"/>
</dbReference>
<dbReference type="GO" id="GO:0030686">
    <property type="term" value="C:90S preribosome"/>
    <property type="evidence" value="ECO:0007669"/>
    <property type="project" value="EnsemblFungi"/>
</dbReference>
<dbReference type="GO" id="GO:0005730">
    <property type="term" value="C:nucleolus"/>
    <property type="evidence" value="ECO:0007669"/>
    <property type="project" value="UniProtKB-SubCell"/>
</dbReference>
<dbReference type="GO" id="GO:0030688">
    <property type="term" value="C:preribosome, small subunit precursor"/>
    <property type="evidence" value="ECO:0007669"/>
    <property type="project" value="EnsemblFungi"/>
</dbReference>
<dbReference type="GO" id="GO:0032040">
    <property type="term" value="C:small-subunit processome"/>
    <property type="evidence" value="ECO:0007669"/>
    <property type="project" value="EnsemblFungi"/>
</dbReference>
<dbReference type="GO" id="GO:0003729">
    <property type="term" value="F:mRNA binding"/>
    <property type="evidence" value="ECO:0007669"/>
    <property type="project" value="UniProtKB-ARBA"/>
</dbReference>
<dbReference type="GO" id="GO:0000480">
    <property type="term" value="P:endonucleolytic cleavage in 5'-ETS of tricistronic rRNA transcript (SSU-rRNA, 5.8S rRNA, LSU-rRNA)"/>
    <property type="evidence" value="ECO:0007669"/>
    <property type="project" value="EnsemblFungi"/>
</dbReference>
<dbReference type="GO" id="GO:0000447">
    <property type="term" value="P:endonucleolytic cleavage in ITS1 to separate SSU-rRNA from 5.8S rRNA and LSU-rRNA from tricistronic rRNA transcript (SSU-rRNA, 5.8S rRNA, LSU-rRNA)"/>
    <property type="evidence" value="ECO:0007669"/>
    <property type="project" value="EnsemblFungi"/>
</dbReference>
<dbReference type="GO" id="GO:0000472">
    <property type="term" value="P:endonucleolytic cleavage to generate mature 5'-end of SSU-rRNA from (SSU-rRNA, 5.8S rRNA, LSU-rRNA)"/>
    <property type="evidence" value="ECO:0007669"/>
    <property type="project" value="EnsemblFungi"/>
</dbReference>
<dbReference type="GO" id="GO:0010629">
    <property type="term" value="P:negative regulation of gene expression"/>
    <property type="evidence" value="ECO:0007669"/>
    <property type="project" value="UniProtKB-ARBA"/>
</dbReference>
<dbReference type="GO" id="GO:0010608">
    <property type="term" value="P:post-transcriptional regulation of gene expression"/>
    <property type="evidence" value="ECO:0007669"/>
    <property type="project" value="UniProtKB-ARBA"/>
</dbReference>
<dbReference type="GO" id="GO:0065008">
    <property type="term" value="P:regulation of biological quality"/>
    <property type="evidence" value="ECO:0007669"/>
    <property type="project" value="UniProtKB-ARBA"/>
</dbReference>
<dbReference type="GO" id="GO:0000056">
    <property type="term" value="P:ribosomal small subunit export from nucleus"/>
    <property type="evidence" value="ECO:0007669"/>
    <property type="project" value="EnsemblFungi"/>
</dbReference>
<dbReference type="Gene3D" id="1.25.10.10">
    <property type="entry name" value="Leucine-rich Repeat Variant"/>
    <property type="match status" value="3"/>
</dbReference>
<dbReference type="InterPro" id="IPR011989">
    <property type="entry name" value="ARM-like"/>
</dbReference>
<dbReference type="InterPro" id="IPR016024">
    <property type="entry name" value="ARM-type_fold"/>
</dbReference>
<dbReference type="InterPro" id="IPR040000">
    <property type="entry name" value="NOP9"/>
</dbReference>
<dbReference type="InterPro" id="IPR033133">
    <property type="entry name" value="PUM-HD"/>
</dbReference>
<dbReference type="InterPro" id="IPR001313">
    <property type="entry name" value="Pumilio_RNA-bd_rpt"/>
</dbReference>
<dbReference type="PANTHER" id="PTHR13102">
    <property type="entry name" value="NUCLEOLAR PROTEIN 9"/>
    <property type="match status" value="1"/>
</dbReference>
<dbReference type="PANTHER" id="PTHR13102:SF0">
    <property type="entry name" value="NUCLEOLAR PROTEIN 9"/>
    <property type="match status" value="1"/>
</dbReference>
<dbReference type="Pfam" id="PF22493">
    <property type="entry name" value="PUF_NOP9"/>
    <property type="match status" value="1"/>
</dbReference>
<dbReference type="SMART" id="SM00025">
    <property type="entry name" value="Pumilio"/>
    <property type="match status" value="8"/>
</dbReference>
<dbReference type="SUPFAM" id="SSF48371">
    <property type="entry name" value="ARM repeat"/>
    <property type="match status" value="1"/>
</dbReference>
<dbReference type="PROSITE" id="PS50302">
    <property type="entry name" value="PUM"/>
    <property type="match status" value="6"/>
</dbReference>
<dbReference type="PROSITE" id="PS50303">
    <property type="entry name" value="PUM_HD"/>
    <property type="match status" value="1"/>
</dbReference>
<accession>C4R8S9</accession>
<gene>
    <name type="primary">NOP9</name>
    <name type="ordered locus">PAS_chr4_0742</name>
</gene>
<name>NOP9_KOMPG</name>
<feature type="chain" id="PRO_0000407828" description="Nucleolar protein 9">
    <location>
        <begin position="1"/>
        <end position="645"/>
    </location>
</feature>
<feature type="repeat" description="Pumilio 1">
    <location>
        <begin position="83"/>
        <end position="118"/>
    </location>
</feature>
<feature type="repeat" description="Pumilio 2">
    <location>
        <begin position="119"/>
        <end position="154"/>
    </location>
</feature>
<feature type="repeat" description="Pumilio 3">
    <location>
        <begin position="183"/>
        <end position="219"/>
    </location>
</feature>
<feature type="repeat" description="Pumilio 4">
    <location>
        <begin position="259"/>
        <end position="304"/>
    </location>
</feature>
<feature type="repeat" description="Pumilio 5">
    <location>
        <begin position="316"/>
        <end position="351"/>
    </location>
</feature>
<feature type="repeat" description="Pumilio 6">
    <location>
        <begin position="353"/>
        <end position="389"/>
    </location>
</feature>
<feature type="repeat" description="Pumilio 7">
    <location>
        <begin position="489"/>
        <end position="526"/>
    </location>
</feature>
<feature type="repeat" description="Pumilio 8">
    <location>
        <begin position="527"/>
        <end position="564"/>
    </location>
</feature>
<feature type="region of interest" description="Disordered" evidence="2">
    <location>
        <begin position="1"/>
        <end position="33"/>
    </location>
</feature>
<feature type="region of interest" description="Disordered" evidence="2">
    <location>
        <begin position="619"/>
        <end position="645"/>
    </location>
</feature>
<feature type="compositionally biased region" description="Basic residues" evidence="2">
    <location>
        <begin position="1"/>
        <end position="11"/>
    </location>
</feature>
<feature type="compositionally biased region" description="Basic and acidic residues" evidence="2">
    <location>
        <begin position="623"/>
        <end position="636"/>
    </location>
</feature>
<keyword id="KW-0539">Nucleus</keyword>
<keyword id="KW-1185">Reference proteome</keyword>
<keyword id="KW-0677">Repeat</keyword>
<keyword id="KW-0690">Ribosome biogenesis</keyword>
<keyword id="KW-0698">rRNA processing</keyword>
<organism>
    <name type="scientific">Komagataella phaffii (strain GS115 / ATCC 20864)</name>
    <name type="common">Yeast</name>
    <name type="synonym">Pichia pastoris</name>
    <dbReference type="NCBI Taxonomy" id="644223"/>
    <lineage>
        <taxon>Eukaryota</taxon>
        <taxon>Fungi</taxon>
        <taxon>Dikarya</taxon>
        <taxon>Ascomycota</taxon>
        <taxon>Saccharomycotina</taxon>
        <taxon>Pichiomycetes</taxon>
        <taxon>Pichiales</taxon>
        <taxon>Pichiaceae</taxon>
        <taxon>Komagataella</taxon>
    </lineage>
</organism>
<evidence type="ECO:0000250" key="1"/>
<evidence type="ECO:0000256" key="2">
    <source>
        <dbReference type="SAM" id="MobiDB-lite"/>
    </source>
</evidence>
<evidence type="ECO:0000305" key="3"/>